<proteinExistence type="evidence at protein level"/>
<organism>
    <name type="scientific">Pyrococcus furiosus (strain ATCC 43587 / DSM 3638 / JCM 8422 / Vc1)</name>
    <dbReference type="NCBI Taxonomy" id="186497"/>
    <lineage>
        <taxon>Archaea</taxon>
        <taxon>Methanobacteriati</taxon>
        <taxon>Methanobacteriota</taxon>
        <taxon>Thermococci</taxon>
        <taxon>Thermococcales</taxon>
        <taxon>Thermococcaceae</taxon>
        <taxon>Pyrococcus</taxon>
    </lineage>
</organism>
<accession>Q8U0M6</accession>
<name>RL30E_PYRFU</name>
<reference key="1">
    <citation type="journal article" date="1999" name="Genetics">
        <title>Divergence of the hyperthermophilic archaea Pyrococcus furiosus and P. horikoshii inferred from complete genomic sequences.</title>
        <authorList>
            <person name="Maeder D.L."/>
            <person name="Weiss R.B."/>
            <person name="Dunn D.M."/>
            <person name="Cherry J.L."/>
            <person name="Gonzalez J.M."/>
            <person name="DiRuggiero J."/>
            <person name="Robb F.T."/>
        </authorList>
    </citation>
    <scope>NUCLEOTIDE SEQUENCE [LARGE SCALE GENOMIC DNA]</scope>
    <source>
        <strain>ATCC 43587 / DSM 3638 / JCM 8422 / Vc1</strain>
    </source>
</reference>
<reference evidence="3" key="2">
    <citation type="journal article" date="2013" name="Nucleic Acids Res.">
        <title>Promiscuous behaviour of archaeal ribosomal proteins: implications for eukaryotic ribosome evolution.</title>
        <authorList>
            <person name="Armache J.P."/>
            <person name="Anger A.M."/>
            <person name="Marquez V."/>
            <person name="Franckenberg S."/>
            <person name="Frohlich T."/>
            <person name="Villa E."/>
            <person name="Berninghausen O."/>
            <person name="Thomm M."/>
            <person name="Arnold G.J."/>
            <person name="Beckmann R."/>
            <person name="Wilson D.N."/>
        </authorList>
    </citation>
    <scope>STRUCTURE BY ELECTRON MICROSCOPY (6.60 ANGSTROMS) IN THE 70S RIBOSOME</scope>
    <scope>SUBUNIT</scope>
</reference>
<gene>
    <name evidence="1" type="primary">rpl30e</name>
    <name type="ordered locus">PF1561</name>
</gene>
<evidence type="ECO:0000255" key="1">
    <source>
        <dbReference type="HAMAP-Rule" id="MF_00481"/>
    </source>
</evidence>
<evidence type="ECO:0000269" key="2">
    <source>
    </source>
</evidence>
<evidence type="ECO:0007744" key="3">
    <source>
        <dbReference type="PDB" id="4V6U"/>
    </source>
</evidence>
<dbReference type="EMBL" id="AE009950">
    <property type="protein sequence ID" value="AAL81685.1"/>
    <property type="molecule type" value="Genomic_DNA"/>
</dbReference>
<dbReference type="RefSeq" id="WP_011012707.1">
    <property type="nucleotide sequence ID" value="NZ_CP023154.1"/>
</dbReference>
<dbReference type="PDB" id="4V4N">
    <property type="method" value="EM"/>
    <property type="resolution" value="9.00 A"/>
    <property type="chains" value="Z=1-99"/>
</dbReference>
<dbReference type="PDB" id="4V6U">
    <property type="method" value="EM"/>
    <property type="resolution" value="6.60 A"/>
    <property type="chains" value="BZ=1-99"/>
</dbReference>
<dbReference type="PDBsum" id="4V4N"/>
<dbReference type="PDBsum" id="4V6U"/>
<dbReference type="SMR" id="Q8U0M6"/>
<dbReference type="STRING" id="186497.PF1561"/>
<dbReference type="PaxDb" id="186497-PF1561"/>
<dbReference type="KEGG" id="pfu:PF1561"/>
<dbReference type="PATRIC" id="fig|186497.12.peg.1627"/>
<dbReference type="eggNOG" id="arCOG01752">
    <property type="taxonomic scope" value="Archaea"/>
</dbReference>
<dbReference type="HOGENOM" id="CLU_130502_1_0_2"/>
<dbReference type="OrthoDB" id="10759at2157"/>
<dbReference type="PhylomeDB" id="Q8U0M6"/>
<dbReference type="Proteomes" id="UP000001013">
    <property type="component" value="Chromosome"/>
</dbReference>
<dbReference type="GO" id="GO:0022625">
    <property type="term" value="C:cytosolic large ribosomal subunit"/>
    <property type="evidence" value="ECO:0007669"/>
    <property type="project" value="InterPro"/>
</dbReference>
<dbReference type="GO" id="GO:0003723">
    <property type="term" value="F:RNA binding"/>
    <property type="evidence" value="ECO:0007669"/>
    <property type="project" value="InterPro"/>
</dbReference>
<dbReference type="GO" id="GO:0003735">
    <property type="term" value="F:structural constituent of ribosome"/>
    <property type="evidence" value="ECO:0007669"/>
    <property type="project" value="InterPro"/>
</dbReference>
<dbReference type="GO" id="GO:0006412">
    <property type="term" value="P:translation"/>
    <property type="evidence" value="ECO:0007669"/>
    <property type="project" value="UniProtKB-UniRule"/>
</dbReference>
<dbReference type="FunFam" id="3.30.1330.30:FF:000053">
    <property type="entry name" value="50S ribosomal protein L30e"/>
    <property type="match status" value="1"/>
</dbReference>
<dbReference type="Gene3D" id="3.30.1330.30">
    <property type="match status" value="1"/>
</dbReference>
<dbReference type="HAMAP" id="MF_00481">
    <property type="entry name" value="Ribosomal_eL30"/>
    <property type="match status" value="1"/>
</dbReference>
<dbReference type="InterPro" id="IPR000231">
    <property type="entry name" value="Ribosomal_eL30"/>
</dbReference>
<dbReference type="InterPro" id="IPR039109">
    <property type="entry name" value="Ribosomal_eL30-like"/>
</dbReference>
<dbReference type="InterPro" id="IPR029064">
    <property type="entry name" value="Ribosomal_eL30-like_sf"/>
</dbReference>
<dbReference type="InterPro" id="IPR022991">
    <property type="entry name" value="Ribosomal_eL30_CS"/>
</dbReference>
<dbReference type="InterPro" id="IPR004038">
    <property type="entry name" value="Ribosomal_eL8/eL30/eS12/Gad45"/>
</dbReference>
<dbReference type="NCBIfam" id="NF002172">
    <property type="entry name" value="PRK01018.1"/>
    <property type="match status" value="1"/>
</dbReference>
<dbReference type="PANTHER" id="PTHR11449">
    <property type="entry name" value="RIBOSOMAL PROTEIN L30"/>
    <property type="match status" value="1"/>
</dbReference>
<dbReference type="Pfam" id="PF01248">
    <property type="entry name" value="Ribosomal_L7Ae"/>
    <property type="match status" value="1"/>
</dbReference>
<dbReference type="SUPFAM" id="SSF55315">
    <property type="entry name" value="L30e-like"/>
    <property type="match status" value="1"/>
</dbReference>
<dbReference type="PROSITE" id="PS00709">
    <property type="entry name" value="RIBOSOMAL_L30E_1"/>
    <property type="match status" value="1"/>
</dbReference>
<dbReference type="PROSITE" id="PS00993">
    <property type="entry name" value="RIBOSOMAL_L30E_2"/>
    <property type="match status" value="1"/>
</dbReference>
<keyword id="KW-0002">3D-structure</keyword>
<keyword id="KW-1185">Reference proteome</keyword>
<keyword id="KW-0687">Ribonucleoprotein</keyword>
<keyword id="KW-0689">Ribosomal protein</keyword>
<feature type="chain" id="PRO_0000146155" description="Large ribosomal subunit protein eL30">
    <location>
        <begin position="1"/>
        <end position="99"/>
    </location>
</feature>
<sequence>MDLAFELRKAMETGKVVLGSNETIRLAKTGGAKLIIVAKNAPKEIKDDIYYYAKLSDIPVYEFEGTSVELGTLLGKPFVVASLAIVDPGESKILAIAKR</sequence>
<comment type="subunit">
    <text evidence="2">Part of the 50S ribosomal subunit.</text>
</comment>
<comment type="similarity">
    <text evidence="1">Belongs to the eukaryotic ribosomal protein eL30 family.</text>
</comment>
<protein>
    <recommendedName>
        <fullName evidence="1">Large ribosomal subunit protein eL30</fullName>
    </recommendedName>
    <alternativeName>
        <fullName>50S ribosomal protein L30e</fullName>
    </alternativeName>
</protein>